<proteinExistence type="evidence at protein level"/>
<name>MATRX_MEASC</name>
<dbReference type="EMBL" id="AB016162">
    <property type="protein sequence ID" value="BAA34980.1"/>
    <property type="molecule type" value="Genomic_RNA"/>
</dbReference>
<dbReference type="PIR" id="PQ0375">
    <property type="entry name" value="PQ0375"/>
</dbReference>
<dbReference type="PIR" id="PQ0379">
    <property type="entry name" value="PQ0379"/>
</dbReference>
<dbReference type="PIR" id="PQ0383">
    <property type="entry name" value="PQ0383"/>
</dbReference>
<dbReference type="PIR" id="PQ0387">
    <property type="entry name" value="PQ0387"/>
</dbReference>
<dbReference type="RefSeq" id="NP_056921.1">
    <property type="nucleotide sequence ID" value="NC_001498.1"/>
</dbReference>
<dbReference type="PDB" id="7SKS">
    <property type="method" value="X-ray"/>
    <property type="resolution" value="2.54 A"/>
    <property type="chains" value="A/B=2-335"/>
</dbReference>
<dbReference type="PDBsum" id="7SKS"/>
<dbReference type="SMR" id="Q9W850"/>
<dbReference type="GeneID" id="1489803"/>
<dbReference type="KEGG" id="vg:1489803"/>
<dbReference type="Proteomes" id="UP000008699">
    <property type="component" value="Segment"/>
</dbReference>
<dbReference type="GO" id="GO:0020002">
    <property type="term" value="C:host cell plasma membrane"/>
    <property type="evidence" value="ECO:0007669"/>
    <property type="project" value="UniProtKB-SubCell"/>
</dbReference>
<dbReference type="GO" id="GO:0016020">
    <property type="term" value="C:membrane"/>
    <property type="evidence" value="ECO:0007669"/>
    <property type="project" value="UniProtKB-KW"/>
</dbReference>
<dbReference type="GO" id="GO:0019031">
    <property type="term" value="C:viral envelope"/>
    <property type="evidence" value="ECO:0007669"/>
    <property type="project" value="UniProtKB-KW"/>
</dbReference>
<dbReference type="GO" id="GO:0008289">
    <property type="term" value="F:lipid binding"/>
    <property type="evidence" value="ECO:0007669"/>
    <property type="project" value="UniProtKB-KW"/>
</dbReference>
<dbReference type="GO" id="GO:0039660">
    <property type="term" value="F:structural constituent of virion"/>
    <property type="evidence" value="ECO:0007669"/>
    <property type="project" value="UniProtKB-KW"/>
</dbReference>
<dbReference type="GO" id="GO:0019068">
    <property type="term" value="P:virion assembly"/>
    <property type="evidence" value="ECO:0007669"/>
    <property type="project" value="InterPro"/>
</dbReference>
<dbReference type="FunFam" id="2.70.20.50:FF:000001">
    <property type="entry name" value="Matrix protein"/>
    <property type="match status" value="1"/>
</dbReference>
<dbReference type="FunFam" id="2.70.20.60:FF:000001">
    <property type="entry name" value="Matrix protein"/>
    <property type="match status" value="1"/>
</dbReference>
<dbReference type="Gene3D" id="2.70.20.60">
    <property type="entry name" value="Viral matrix protein, C-terminal domain"/>
    <property type="match status" value="1"/>
</dbReference>
<dbReference type="Gene3D" id="2.70.20.50">
    <property type="entry name" value="Viral matrix protein, N-terminal domain"/>
    <property type="match status" value="1"/>
</dbReference>
<dbReference type="InterPro" id="IPR042539">
    <property type="entry name" value="Matrix_C"/>
</dbReference>
<dbReference type="InterPro" id="IPR042540">
    <property type="entry name" value="Matrix_N"/>
</dbReference>
<dbReference type="InterPro" id="IPR055413">
    <property type="entry name" value="Matrix_Paramyxo_C"/>
</dbReference>
<dbReference type="InterPro" id="IPR000982">
    <property type="entry name" value="Matrix_Paramyxo_N"/>
</dbReference>
<dbReference type="Pfam" id="PF23765">
    <property type="entry name" value="Matrix_Paramyxo_C"/>
    <property type="match status" value="1"/>
</dbReference>
<dbReference type="Pfam" id="PF00661">
    <property type="entry name" value="Matrix_Paramyxo_N"/>
    <property type="match status" value="1"/>
</dbReference>
<sequence length="335" mass="37712">MTEIYDFDKSAWDIKGSIAPIQPTTYSDGRLVPQVRVIDPGLGDRKDECFMYMFLLGVVEDSDPLGPPIGRAFGSLPLGVGRSTAKPEELLKEATELDIVVRRTAGLNEKLVFYNNTPLTLLTPWRKVLTTGSVFNANQVCNAVNLIPLDTPQRFRVVYMSITRLSDNGYYTVPRRMLEFRSVNAVAFNLLVTLRIDKAIGPGKIIDNAEQLPEATFMVHIGNFRRKKSEVYSADYCKMKIEKMGLVFALGGIGGTSLHIRSTGKMSKTLHAQLGFKKTLCYPLMDINEDLNRLLWRSRCKIVRIQAVLQPSVPQEFRIYDDVIINDDQGLFKVL</sequence>
<accession>Q9W850</accession>
<evidence type="ECO:0000269" key="1">
    <source>
    </source>
</evidence>
<evidence type="ECO:0000269" key="2">
    <source>
    </source>
</evidence>
<evidence type="ECO:0000305" key="3"/>
<evidence type="ECO:0007744" key="4">
    <source>
        <dbReference type="PDB" id="7SKS"/>
    </source>
</evidence>
<evidence type="ECO:0007829" key="5">
    <source>
        <dbReference type="PDB" id="7SKS"/>
    </source>
</evidence>
<gene>
    <name type="primary">M</name>
</gene>
<comment type="function">
    <text evidence="2">The M protein has a crucial role in virus assembly and interacts with the RNP complex as well as with the viral membrane. Associates with phosphatidylserine (PS) and phosphatidylinositol 4,5-bisphosphate (PIP2) at the plasma membrane (PubMed:35857835). Interaction with PIP2 triggers matrix protein lattice polymerization (PubMed:35857835). Matrix proteins induce host membrane deformation and curvature necessary for virion assembly/budding (PubMed:35857835).</text>
</comment>
<comment type="subunit">
    <text evidence="1 2">Homodimer (PubMed:35857835). Dimerization is critical for virion formation (PubMed:35857835). Interacts with host ANP32B (PubMed:31793855).</text>
</comment>
<comment type="subcellular location">
    <subcellularLocation>
        <location evidence="3">Virion</location>
    </subcellularLocation>
    <subcellularLocation>
        <location evidence="2">Host cell membrane</location>
    </subcellularLocation>
</comment>
<comment type="similarity">
    <text evidence="3">Belongs to the morbillivirus/respirovirus/rubulavirus M protein family.</text>
</comment>
<organismHost>
    <name type="scientific">Homo sapiens</name>
    <name type="common">Human</name>
    <dbReference type="NCBI Taxonomy" id="9606"/>
</organismHost>
<protein>
    <recommendedName>
        <fullName>Matrix protein</fullName>
    </recommendedName>
</protein>
<organism>
    <name type="scientific">Measles virus (strain Ichinose-B95a)</name>
    <name type="common">MeV</name>
    <name type="synonym">Subacute sclerose panencephalitis virus</name>
    <dbReference type="NCBI Taxonomy" id="645098"/>
    <lineage>
        <taxon>Viruses</taxon>
        <taxon>Riboviria</taxon>
        <taxon>Orthornavirae</taxon>
        <taxon>Negarnaviricota</taxon>
        <taxon>Haploviricotina</taxon>
        <taxon>Monjiviricetes</taxon>
        <taxon>Mononegavirales</taxon>
        <taxon>Paramyxoviridae</taxon>
        <taxon>Orthoparamyxovirinae</taxon>
        <taxon>Morbillivirus</taxon>
        <taxon>Morbillivirus hominis</taxon>
        <taxon>Measles morbillivirus</taxon>
    </lineage>
</organism>
<reference key="1">
    <citation type="journal article" date="2000" name="Virus Genes">
        <title>Comparative nucleotide sequence analyses of the entire genomes of B95a cell-isolated and vero cell-isolated measles viruses from the same patient.</title>
        <authorList>
            <person name="Takeuchi K."/>
            <person name="Miyajima N."/>
            <person name="Kobune F."/>
            <person name="Tashiro M."/>
        </authorList>
    </citation>
    <scope>NUCLEOTIDE SEQUENCE [GENOMIC RNA]</scope>
</reference>
<reference key="2">
    <citation type="journal article" date="2020" name="J. Gen. Virol.">
        <title>Interaction of host cellular factor ANP32B with matrix proteins of different paramyxoviruses.</title>
        <authorList>
            <person name="Guenther M."/>
            <person name="Bauer A."/>
            <person name="Mueller M."/>
            <person name="Zaeck L."/>
            <person name="Finke S."/>
        </authorList>
    </citation>
    <scope>INTERACTION WITH HOST ANP32B</scope>
</reference>
<reference evidence="4" key="3">
    <citation type="journal article" date="2022" name="Sci. Adv.">
        <title>Measles and Nipah virus assembly: Specific lipid binding drives matrix polymerization.</title>
        <authorList>
            <person name="Norris M.J."/>
            <person name="Husby M.L."/>
            <person name="Kiosses W.B."/>
            <person name="Yin J."/>
            <person name="Saxena R."/>
            <person name="Rennick L.J."/>
            <person name="Heiner A."/>
            <person name="Harkins S.S."/>
            <person name="Pokhrel R."/>
            <person name="Schendel S.L."/>
            <person name="Hastie K.M."/>
            <person name="Landeras-Bueno S."/>
            <person name="Salie Z.L."/>
            <person name="Lee B."/>
            <person name="Chapagain P.P."/>
            <person name="Maisner A."/>
            <person name="Duprex W.P."/>
            <person name="Stahelin R.V."/>
            <person name="Saphire E.O."/>
        </authorList>
    </citation>
    <scope>X-RAY CRYSTALLOGRAPHY (2.54 ANGSTROMS) OF 2-335</scope>
    <scope>FUNCTION</scope>
    <scope>SUBCELLULAR LOCATION</scope>
    <scope>SUBUNIT</scope>
</reference>
<keyword id="KW-0002">3D-structure</keyword>
<keyword id="KW-1032">Host cell membrane</keyword>
<keyword id="KW-1043">Host membrane</keyword>
<keyword id="KW-0945">Host-virus interaction</keyword>
<keyword id="KW-0446">Lipid-binding</keyword>
<keyword id="KW-0472">Membrane</keyword>
<keyword id="KW-1185">Reference proteome</keyword>
<keyword id="KW-0261">Viral envelope protein</keyword>
<keyword id="KW-0468">Viral matrix protein</keyword>
<keyword id="KW-0946">Virion</keyword>
<feature type="chain" id="PRO_0000394719" description="Matrix protein">
    <location>
        <begin position="1"/>
        <end position="335"/>
    </location>
</feature>
<feature type="strand" evidence="5">
    <location>
        <begin position="34"/>
        <end position="38"/>
    </location>
</feature>
<feature type="strand" evidence="5">
    <location>
        <begin position="50"/>
        <end position="61"/>
    </location>
</feature>
<feature type="strand" evidence="5">
    <location>
        <begin position="70"/>
        <end position="82"/>
    </location>
</feature>
<feature type="helix" evidence="5">
    <location>
        <begin position="87"/>
        <end position="95"/>
    </location>
</feature>
<feature type="strand" evidence="5">
    <location>
        <begin position="99"/>
        <end position="115"/>
    </location>
</feature>
<feature type="helix" evidence="5">
    <location>
        <begin position="123"/>
        <end position="125"/>
    </location>
</feature>
<feature type="helix" evidence="5">
    <location>
        <begin position="126"/>
        <end position="131"/>
    </location>
</feature>
<feature type="strand" evidence="5">
    <location>
        <begin position="133"/>
        <end position="136"/>
    </location>
</feature>
<feature type="helix" evidence="5">
    <location>
        <begin position="137"/>
        <end position="140"/>
    </location>
</feature>
<feature type="helix" evidence="5">
    <location>
        <begin position="144"/>
        <end position="146"/>
    </location>
</feature>
<feature type="strand" evidence="5">
    <location>
        <begin position="149"/>
        <end position="151"/>
    </location>
</feature>
<feature type="strand" evidence="5">
    <location>
        <begin position="153"/>
        <end position="164"/>
    </location>
</feature>
<feature type="strand" evidence="5">
    <location>
        <begin position="166"/>
        <end position="169"/>
    </location>
</feature>
<feature type="helix" evidence="5">
    <location>
        <begin position="175"/>
        <end position="179"/>
    </location>
</feature>
<feature type="strand" evidence="5">
    <location>
        <begin position="185"/>
        <end position="197"/>
    </location>
</feature>
<feature type="strand" evidence="5">
    <location>
        <begin position="214"/>
        <end position="225"/>
    </location>
</feature>
<feature type="helix" evidence="5">
    <location>
        <begin position="235"/>
        <end position="244"/>
    </location>
</feature>
<feature type="strand" evidence="5">
    <location>
        <begin position="246"/>
        <end position="251"/>
    </location>
</feature>
<feature type="strand" evidence="5">
    <location>
        <begin position="255"/>
        <end position="262"/>
    </location>
</feature>
<feature type="strand" evidence="5">
    <location>
        <begin position="279"/>
        <end position="283"/>
    </location>
</feature>
<feature type="helix" evidence="5">
    <location>
        <begin position="284"/>
        <end position="287"/>
    </location>
</feature>
<feature type="helix" evidence="5">
    <location>
        <begin position="289"/>
        <end position="294"/>
    </location>
</feature>
<feature type="turn" evidence="5">
    <location>
        <begin position="295"/>
        <end position="297"/>
    </location>
</feature>
<feature type="strand" evidence="5">
    <location>
        <begin position="298"/>
        <end position="313"/>
    </location>
</feature>
<feature type="helix" evidence="5">
    <location>
        <begin position="314"/>
        <end position="316"/>
    </location>
</feature>
<feature type="turn" evidence="5">
    <location>
        <begin position="317"/>
        <end position="319"/>
    </location>
</feature>
<feature type="strand" evidence="5">
    <location>
        <begin position="323"/>
        <end position="326"/>
    </location>
</feature>
<feature type="strand" evidence="5">
    <location>
        <begin position="332"/>
        <end position="334"/>
    </location>
</feature>